<name>LEU11_LEPIN</name>
<proteinExistence type="evidence at protein level"/>
<sequence length="501" mass="54744">MDLKDYVRIFDTTLRDGEQCPGAAMTENEKLEIASQLATMKVDIIEAGFPVSSPVQFQAVERIARETEGPMIAALARAMKADIEAASKALQPAKKRRIHTFIASSPIHMKYKLGKEPKEVLKMAVEAVTLCRQFVDDVEFSPEDATRSEPEFLRELCEAVIAAGATTINIPDTVGYTTPAEYGGLFKFLLSNVRGAEKIIFSAHCHNDLGLATANSLAAVQNGARQIECTINGIGERAGNTAMEEVVMAMRTRKDTFGIQTQIKTEEIARASYLVKTITGMLVQPNKAIVGANAFAHESGIHQDGVIKHRETYEIMKPETVGLSSNRMVLGRHSGRAGFKDRIVKLGFSPQVEELEAAYQRFLEIADRKKEIYDEDIRALFSEEARKSTGDRFQLEGFTVSTGTKSTPTAGVRILIDGHVREESATGDGPVDAIYKAIQKTTGMDPEVSRLVISPVTEGQDAMAEASVTLEYKGDRVVGKGSSTDIIEACSRAYISALNRL</sequence>
<evidence type="ECO:0000255" key="1">
    <source>
        <dbReference type="HAMAP-Rule" id="MF_01025"/>
    </source>
</evidence>
<evidence type="ECO:0000269" key="2">
    <source>
    </source>
</evidence>
<evidence type="ECO:0000303" key="3">
    <source>
    </source>
</evidence>
<evidence type="ECO:0000305" key="4"/>
<reference key="1">
    <citation type="journal article" date="2003" name="Nature">
        <title>Unique physiological and pathogenic features of Leptospira interrogans revealed by whole-genome sequencing.</title>
        <authorList>
            <person name="Ren S.-X."/>
            <person name="Fu G."/>
            <person name="Jiang X.-G."/>
            <person name="Zeng R."/>
            <person name="Miao Y.-G."/>
            <person name="Xu H."/>
            <person name="Zhang Y.-X."/>
            <person name="Xiong H."/>
            <person name="Lu G."/>
            <person name="Lu L.-F."/>
            <person name="Jiang H.-Q."/>
            <person name="Jia J."/>
            <person name="Tu Y.-F."/>
            <person name="Jiang J.-X."/>
            <person name="Gu W.-Y."/>
            <person name="Zhang Y.-Q."/>
            <person name="Cai Z."/>
            <person name="Sheng H.-H."/>
            <person name="Yin H.-F."/>
            <person name="Zhang Y."/>
            <person name="Zhu G.-F."/>
            <person name="Wan M."/>
            <person name="Huang H.-L."/>
            <person name="Qian Z."/>
            <person name="Wang S.-Y."/>
            <person name="Ma W."/>
            <person name="Yao Z.-J."/>
            <person name="Shen Y."/>
            <person name="Qiang B.-Q."/>
            <person name="Xia Q.-C."/>
            <person name="Guo X.-K."/>
            <person name="Danchin A."/>
            <person name="Saint Girons I."/>
            <person name="Somerville R.L."/>
            <person name="Wen Y.-M."/>
            <person name="Shi M.-H."/>
            <person name="Chen Z."/>
            <person name="Xu J.-G."/>
            <person name="Zhao G.-P."/>
        </authorList>
    </citation>
    <scope>NUCLEOTIDE SEQUENCE [LARGE SCALE GENOMIC DNA]</scope>
    <source>
        <strain>56601</strain>
    </source>
</reference>
<reference key="2">
    <citation type="journal article" date="2004" name="J. Bacteriol.">
        <title>Isoleucine biosynthesis in Leptospira interrogans serotype lai strain 56601 proceeds via a threonine-independent pathway.</title>
        <authorList>
            <person name="Xu H."/>
            <person name="Zhang Y."/>
            <person name="Guo X."/>
            <person name="Ren S."/>
            <person name="Staempfli A.A."/>
            <person name="Chiao J."/>
            <person name="Jiang W."/>
            <person name="Zhao G."/>
        </authorList>
    </citation>
    <scope>FUNCTION</scope>
    <scope>CATALYTIC ACTIVITY</scope>
    <scope>PATHWAY</scope>
    <scope>INDUCTION</scope>
    <source>
        <strain>56601</strain>
    </source>
</reference>
<dbReference type="EC" id="2.3.3.13" evidence="1 2"/>
<dbReference type="EMBL" id="AE010300">
    <property type="protein sequence ID" value="AAN49401.1"/>
    <property type="status" value="ALT_INIT"/>
    <property type="molecule type" value="Genomic_DNA"/>
</dbReference>
<dbReference type="RefSeq" id="NP_712383.1">
    <property type="nucleotide sequence ID" value="NC_004342.2"/>
</dbReference>
<dbReference type="SMR" id="Q8F445"/>
<dbReference type="FunCoup" id="Q8F445">
    <property type="interactions" value="435"/>
</dbReference>
<dbReference type="STRING" id="189518.LA_2202"/>
<dbReference type="PaxDb" id="189518-LA_2202"/>
<dbReference type="EnsemblBacteria" id="AAN49401">
    <property type="protein sequence ID" value="AAN49401"/>
    <property type="gene ID" value="LA_2202"/>
</dbReference>
<dbReference type="KEGG" id="lil:LA_2202"/>
<dbReference type="PATRIC" id="fig|189518.3.peg.2193"/>
<dbReference type="HOGENOM" id="CLU_022158_0_1_12"/>
<dbReference type="InParanoid" id="Q8F445"/>
<dbReference type="OrthoDB" id="9804858at2"/>
<dbReference type="UniPathway" id="UPA00048">
    <property type="reaction ID" value="UER00070"/>
</dbReference>
<dbReference type="Proteomes" id="UP000001408">
    <property type="component" value="Chromosome I"/>
</dbReference>
<dbReference type="GO" id="GO:0005737">
    <property type="term" value="C:cytoplasm"/>
    <property type="evidence" value="ECO:0007669"/>
    <property type="project" value="UniProtKB-SubCell"/>
</dbReference>
<dbReference type="GO" id="GO:0003852">
    <property type="term" value="F:2-isopropylmalate synthase activity"/>
    <property type="evidence" value="ECO:0000318"/>
    <property type="project" value="GO_Central"/>
</dbReference>
<dbReference type="GO" id="GO:0003985">
    <property type="term" value="F:acetyl-CoA C-acetyltransferase activity"/>
    <property type="evidence" value="ECO:0007669"/>
    <property type="project" value="UniProtKB-UniRule"/>
</dbReference>
<dbReference type="GO" id="GO:0030145">
    <property type="term" value="F:manganese ion binding"/>
    <property type="evidence" value="ECO:0007669"/>
    <property type="project" value="UniProtKB-UniRule"/>
</dbReference>
<dbReference type="GO" id="GO:0009098">
    <property type="term" value="P:L-leucine biosynthetic process"/>
    <property type="evidence" value="ECO:0000318"/>
    <property type="project" value="GO_Central"/>
</dbReference>
<dbReference type="CDD" id="cd07940">
    <property type="entry name" value="DRE_TIM_IPMS"/>
    <property type="match status" value="1"/>
</dbReference>
<dbReference type="FunFam" id="1.10.238.260:FF:000001">
    <property type="entry name" value="2-isopropylmalate synthase"/>
    <property type="match status" value="1"/>
</dbReference>
<dbReference type="FunFam" id="3.20.20.70:FF:000010">
    <property type="entry name" value="2-isopropylmalate synthase"/>
    <property type="match status" value="1"/>
</dbReference>
<dbReference type="FunFam" id="3.30.160.270:FF:000001">
    <property type="entry name" value="2-isopropylmalate synthase"/>
    <property type="match status" value="1"/>
</dbReference>
<dbReference type="Gene3D" id="1.10.238.260">
    <property type="match status" value="1"/>
</dbReference>
<dbReference type="Gene3D" id="3.30.160.270">
    <property type="match status" value="1"/>
</dbReference>
<dbReference type="Gene3D" id="3.20.20.70">
    <property type="entry name" value="Aldolase class I"/>
    <property type="match status" value="1"/>
</dbReference>
<dbReference type="HAMAP" id="MF_01025">
    <property type="entry name" value="LeuA_type1"/>
    <property type="match status" value="1"/>
</dbReference>
<dbReference type="InterPro" id="IPR050073">
    <property type="entry name" value="2-IPM_HCS-like"/>
</dbReference>
<dbReference type="InterPro" id="IPR013709">
    <property type="entry name" value="2-isopropylmalate_synth_dimer"/>
</dbReference>
<dbReference type="InterPro" id="IPR002034">
    <property type="entry name" value="AIPM/Hcit_synth_CS"/>
</dbReference>
<dbReference type="InterPro" id="IPR013785">
    <property type="entry name" value="Aldolase_TIM"/>
</dbReference>
<dbReference type="InterPro" id="IPR054691">
    <property type="entry name" value="LeuA/HCS_post-cat"/>
</dbReference>
<dbReference type="InterPro" id="IPR036230">
    <property type="entry name" value="LeuA_allosteric_dom_sf"/>
</dbReference>
<dbReference type="InterPro" id="IPR005671">
    <property type="entry name" value="LeuA_bact_synth"/>
</dbReference>
<dbReference type="InterPro" id="IPR000891">
    <property type="entry name" value="PYR_CT"/>
</dbReference>
<dbReference type="NCBIfam" id="TIGR00973">
    <property type="entry name" value="leuA_bact"/>
    <property type="match status" value="1"/>
</dbReference>
<dbReference type="NCBIfam" id="NF002086">
    <property type="entry name" value="PRK00915.1-3"/>
    <property type="match status" value="1"/>
</dbReference>
<dbReference type="NCBIfam" id="NF002087">
    <property type="entry name" value="PRK00915.1-4"/>
    <property type="match status" value="1"/>
</dbReference>
<dbReference type="PANTHER" id="PTHR10277:SF9">
    <property type="entry name" value="2-ISOPROPYLMALATE SYNTHASE 1, CHLOROPLASTIC-RELATED"/>
    <property type="match status" value="1"/>
</dbReference>
<dbReference type="PANTHER" id="PTHR10277">
    <property type="entry name" value="HOMOCITRATE SYNTHASE-RELATED"/>
    <property type="match status" value="1"/>
</dbReference>
<dbReference type="Pfam" id="PF22617">
    <property type="entry name" value="HCS_D2"/>
    <property type="match status" value="1"/>
</dbReference>
<dbReference type="Pfam" id="PF00682">
    <property type="entry name" value="HMGL-like"/>
    <property type="match status" value="1"/>
</dbReference>
<dbReference type="Pfam" id="PF08502">
    <property type="entry name" value="LeuA_dimer"/>
    <property type="match status" value="1"/>
</dbReference>
<dbReference type="SMART" id="SM00917">
    <property type="entry name" value="LeuA_dimer"/>
    <property type="match status" value="1"/>
</dbReference>
<dbReference type="SUPFAM" id="SSF110921">
    <property type="entry name" value="2-isopropylmalate synthase LeuA, allosteric (dimerisation) domain"/>
    <property type="match status" value="1"/>
</dbReference>
<dbReference type="SUPFAM" id="SSF51569">
    <property type="entry name" value="Aldolase"/>
    <property type="match status" value="1"/>
</dbReference>
<dbReference type="PROSITE" id="PS00815">
    <property type="entry name" value="AIPM_HOMOCIT_SYNTH_1"/>
    <property type="match status" value="1"/>
</dbReference>
<dbReference type="PROSITE" id="PS00816">
    <property type="entry name" value="AIPM_HOMOCIT_SYNTH_2"/>
    <property type="match status" value="1"/>
</dbReference>
<dbReference type="PROSITE" id="PS50991">
    <property type="entry name" value="PYR_CT"/>
    <property type="match status" value="1"/>
</dbReference>
<protein>
    <recommendedName>
        <fullName evidence="1">2-isopropylmalate synthase 1</fullName>
        <ecNumber evidence="1 2">2.3.3.13</ecNumber>
    </recommendedName>
    <alternativeName>
        <fullName evidence="1">Alpha-IPM synthase 1</fullName>
    </alternativeName>
    <alternativeName>
        <fullName evidence="3">Alpha-isopropylmalate synthase 1</fullName>
    </alternativeName>
</protein>
<comment type="function">
    <text evidence="1 2">Catalyzes the condensation of the acetyl group of acetyl-CoA with 3-methyl-2-oxobutanoate (2-ketoisovalerate) to form 3-carboxy-3-hydroxy-4-methylpentanoate (2-isopropylmalate) (PubMed:15292141). Has very low alpha-isopropylmalate synthase activity, does not have citramalate synthase activity (PubMed:15292141).</text>
</comment>
<comment type="catalytic activity">
    <reaction evidence="1 2">
        <text>3-methyl-2-oxobutanoate + acetyl-CoA + H2O = (2S)-2-isopropylmalate + CoA + H(+)</text>
        <dbReference type="Rhea" id="RHEA:21524"/>
        <dbReference type="ChEBI" id="CHEBI:1178"/>
        <dbReference type="ChEBI" id="CHEBI:11851"/>
        <dbReference type="ChEBI" id="CHEBI:15377"/>
        <dbReference type="ChEBI" id="CHEBI:15378"/>
        <dbReference type="ChEBI" id="CHEBI:57287"/>
        <dbReference type="ChEBI" id="CHEBI:57288"/>
        <dbReference type="EC" id="2.3.3.13"/>
    </reaction>
    <physiologicalReaction direction="left-to-right" evidence="2">
        <dbReference type="Rhea" id="RHEA:21525"/>
    </physiologicalReaction>
</comment>
<comment type="cofactor">
    <cofactor evidence="1">
        <name>Mn(2+)</name>
        <dbReference type="ChEBI" id="CHEBI:29035"/>
    </cofactor>
</comment>
<comment type="pathway">
    <text evidence="1 2">Amino-acid biosynthesis; L-leucine biosynthesis; L-leucine from 3-methyl-2-oxobutanoate: step 1/4.</text>
</comment>
<comment type="subunit">
    <text evidence="1">Homodimer.</text>
</comment>
<comment type="subcellular location">
    <subcellularLocation>
        <location evidence="1">Cytoplasm</location>
    </subcellularLocation>
</comment>
<comment type="induction">
    <text evidence="2">Expression is significantly repressed by leucine and moderately repressed by isoleucine.</text>
</comment>
<comment type="similarity">
    <text evidence="1">Belongs to the alpha-IPM synthase/homocitrate synthase family. LeuA type 1 subfamily.</text>
</comment>
<comment type="sequence caution" evidence="4">
    <conflict type="erroneous initiation">
        <sequence resource="EMBL-CDS" id="AAN49401"/>
    </conflict>
    <text>Extended N-terminus.</text>
</comment>
<feature type="chain" id="PRO_0000140358" description="2-isopropylmalate synthase 1">
    <location>
        <begin position="1"/>
        <end position="501"/>
    </location>
</feature>
<feature type="domain" description="Pyruvate carboxyltransferase" evidence="1">
    <location>
        <begin position="7"/>
        <end position="269"/>
    </location>
</feature>
<feature type="region of interest" description="Regulatory domain" evidence="1">
    <location>
        <begin position="394"/>
        <end position="501"/>
    </location>
</feature>
<feature type="binding site" evidence="1">
    <location>
        <position position="16"/>
    </location>
    <ligand>
        <name>Mn(2+)</name>
        <dbReference type="ChEBI" id="CHEBI:29035"/>
    </ligand>
</feature>
<feature type="binding site" evidence="1">
    <location>
        <position position="204"/>
    </location>
    <ligand>
        <name>Mn(2+)</name>
        <dbReference type="ChEBI" id="CHEBI:29035"/>
    </ligand>
</feature>
<feature type="binding site" evidence="1">
    <location>
        <position position="206"/>
    </location>
    <ligand>
        <name>Mn(2+)</name>
        <dbReference type="ChEBI" id="CHEBI:29035"/>
    </ligand>
</feature>
<feature type="binding site" evidence="1">
    <location>
        <position position="240"/>
    </location>
    <ligand>
        <name>Mn(2+)</name>
        <dbReference type="ChEBI" id="CHEBI:29035"/>
    </ligand>
</feature>
<organism>
    <name type="scientific">Leptospira interrogans serogroup Icterohaemorrhagiae serovar Lai (strain 56601)</name>
    <dbReference type="NCBI Taxonomy" id="189518"/>
    <lineage>
        <taxon>Bacteria</taxon>
        <taxon>Pseudomonadati</taxon>
        <taxon>Spirochaetota</taxon>
        <taxon>Spirochaetia</taxon>
        <taxon>Leptospirales</taxon>
        <taxon>Leptospiraceae</taxon>
        <taxon>Leptospira</taxon>
    </lineage>
</organism>
<accession>Q8F445</accession>
<gene>
    <name evidence="1 3" type="primary">leuA1</name>
    <name type="ordered locus">LA_2202</name>
</gene>
<keyword id="KW-0028">Amino-acid biosynthesis</keyword>
<keyword id="KW-0100">Branched-chain amino acid biosynthesis</keyword>
<keyword id="KW-0963">Cytoplasm</keyword>
<keyword id="KW-0432">Leucine biosynthesis</keyword>
<keyword id="KW-0464">Manganese</keyword>
<keyword id="KW-0479">Metal-binding</keyword>
<keyword id="KW-1185">Reference proteome</keyword>
<keyword id="KW-0808">Transferase</keyword>